<reference key="1">
    <citation type="journal article" date="1998" name="Mamm. Genome">
        <title>Identification and characterization of the murine FK506 binding protein (FKBP) 12.6 gene.</title>
        <authorList>
            <person name="Bennett J.A."/>
            <person name="Clancy Y.C."/>
            <person name="McNeish J.D."/>
        </authorList>
    </citation>
    <scope>NUCLEOTIDE SEQUENCE [MRNA]</scope>
    <source>
        <strain>C57BL/6J</strain>
    </source>
</reference>
<reference key="2">
    <citation type="journal article" date="2005" name="Science">
        <title>The transcriptional landscape of the mammalian genome.</title>
        <authorList>
            <person name="Carninci P."/>
            <person name="Kasukawa T."/>
            <person name="Katayama S."/>
            <person name="Gough J."/>
            <person name="Frith M.C."/>
            <person name="Maeda N."/>
            <person name="Oyama R."/>
            <person name="Ravasi T."/>
            <person name="Lenhard B."/>
            <person name="Wells C."/>
            <person name="Kodzius R."/>
            <person name="Shimokawa K."/>
            <person name="Bajic V.B."/>
            <person name="Brenner S.E."/>
            <person name="Batalov S."/>
            <person name="Forrest A.R."/>
            <person name="Zavolan M."/>
            <person name="Davis M.J."/>
            <person name="Wilming L.G."/>
            <person name="Aidinis V."/>
            <person name="Allen J.E."/>
            <person name="Ambesi-Impiombato A."/>
            <person name="Apweiler R."/>
            <person name="Aturaliya R.N."/>
            <person name="Bailey T.L."/>
            <person name="Bansal M."/>
            <person name="Baxter L."/>
            <person name="Beisel K.W."/>
            <person name="Bersano T."/>
            <person name="Bono H."/>
            <person name="Chalk A.M."/>
            <person name="Chiu K.P."/>
            <person name="Choudhary V."/>
            <person name="Christoffels A."/>
            <person name="Clutterbuck D.R."/>
            <person name="Crowe M.L."/>
            <person name="Dalla E."/>
            <person name="Dalrymple B.P."/>
            <person name="de Bono B."/>
            <person name="Della Gatta G."/>
            <person name="di Bernardo D."/>
            <person name="Down T."/>
            <person name="Engstrom P."/>
            <person name="Fagiolini M."/>
            <person name="Faulkner G."/>
            <person name="Fletcher C.F."/>
            <person name="Fukushima T."/>
            <person name="Furuno M."/>
            <person name="Futaki S."/>
            <person name="Gariboldi M."/>
            <person name="Georgii-Hemming P."/>
            <person name="Gingeras T.R."/>
            <person name="Gojobori T."/>
            <person name="Green R.E."/>
            <person name="Gustincich S."/>
            <person name="Harbers M."/>
            <person name="Hayashi Y."/>
            <person name="Hensch T.K."/>
            <person name="Hirokawa N."/>
            <person name="Hill D."/>
            <person name="Huminiecki L."/>
            <person name="Iacono M."/>
            <person name="Ikeo K."/>
            <person name="Iwama A."/>
            <person name="Ishikawa T."/>
            <person name="Jakt M."/>
            <person name="Kanapin A."/>
            <person name="Katoh M."/>
            <person name="Kawasawa Y."/>
            <person name="Kelso J."/>
            <person name="Kitamura H."/>
            <person name="Kitano H."/>
            <person name="Kollias G."/>
            <person name="Krishnan S.P."/>
            <person name="Kruger A."/>
            <person name="Kummerfeld S.K."/>
            <person name="Kurochkin I.V."/>
            <person name="Lareau L.F."/>
            <person name="Lazarevic D."/>
            <person name="Lipovich L."/>
            <person name="Liu J."/>
            <person name="Liuni S."/>
            <person name="McWilliam S."/>
            <person name="Madan Babu M."/>
            <person name="Madera M."/>
            <person name="Marchionni L."/>
            <person name="Matsuda H."/>
            <person name="Matsuzawa S."/>
            <person name="Miki H."/>
            <person name="Mignone F."/>
            <person name="Miyake S."/>
            <person name="Morris K."/>
            <person name="Mottagui-Tabar S."/>
            <person name="Mulder N."/>
            <person name="Nakano N."/>
            <person name="Nakauchi H."/>
            <person name="Ng P."/>
            <person name="Nilsson R."/>
            <person name="Nishiguchi S."/>
            <person name="Nishikawa S."/>
            <person name="Nori F."/>
            <person name="Ohara O."/>
            <person name="Okazaki Y."/>
            <person name="Orlando V."/>
            <person name="Pang K.C."/>
            <person name="Pavan W.J."/>
            <person name="Pavesi G."/>
            <person name="Pesole G."/>
            <person name="Petrovsky N."/>
            <person name="Piazza S."/>
            <person name="Reed J."/>
            <person name="Reid J.F."/>
            <person name="Ring B.Z."/>
            <person name="Ringwald M."/>
            <person name="Rost B."/>
            <person name="Ruan Y."/>
            <person name="Salzberg S.L."/>
            <person name="Sandelin A."/>
            <person name="Schneider C."/>
            <person name="Schoenbach C."/>
            <person name="Sekiguchi K."/>
            <person name="Semple C.A."/>
            <person name="Seno S."/>
            <person name="Sessa L."/>
            <person name="Sheng Y."/>
            <person name="Shibata Y."/>
            <person name="Shimada H."/>
            <person name="Shimada K."/>
            <person name="Silva D."/>
            <person name="Sinclair B."/>
            <person name="Sperling S."/>
            <person name="Stupka E."/>
            <person name="Sugiura K."/>
            <person name="Sultana R."/>
            <person name="Takenaka Y."/>
            <person name="Taki K."/>
            <person name="Tammoja K."/>
            <person name="Tan S.L."/>
            <person name="Tang S."/>
            <person name="Taylor M.S."/>
            <person name="Tegner J."/>
            <person name="Teichmann S.A."/>
            <person name="Ueda H.R."/>
            <person name="van Nimwegen E."/>
            <person name="Verardo R."/>
            <person name="Wei C.L."/>
            <person name="Yagi K."/>
            <person name="Yamanishi H."/>
            <person name="Zabarovsky E."/>
            <person name="Zhu S."/>
            <person name="Zimmer A."/>
            <person name="Hide W."/>
            <person name="Bult C."/>
            <person name="Grimmond S.M."/>
            <person name="Teasdale R.D."/>
            <person name="Liu E.T."/>
            <person name="Brusic V."/>
            <person name="Quackenbush J."/>
            <person name="Wahlestedt C."/>
            <person name="Mattick J.S."/>
            <person name="Hume D.A."/>
            <person name="Kai C."/>
            <person name="Sasaki D."/>
            <person name="Tomaru Y."/>
            <person name="Fukuda S."/>
            <person name="Kanamori-Katayama M."/>
            <person name="Suzuki M."/>
            <person name="Aoki J."/>
            <person name="Arakawa T."/>
            <person name="Iida J."/>
            <person name="Imamura K."/>
            <person name="Itoh M."/>
            <person name="Kato T."/>
            <person name="Kawaji H."/>
            <person name="Kawagashira N."/>
            <person name="Kawashima T."/>
            <person name="Kojima M."/>
            <person name="Kondo S."/>
            <person name="Konno H."/>
            <person name="Nakano K."/>
            <person name="Ninomiya N."/>
            <person name="Nishio T."/>
            <person name="Okada M."/>
            <person name="Plessy C."/>
            <person name="Shibata K."/>
            <person name="Shiraki T."/>
            <person name="Suzuki S."/>
            <person name="Tagami M."/>
            <person name="Waki K."/>
            <person name="Watahiki A."/>
            <person name="Okamura-Oho Y."/>
            <person name="Suzuki H."/>
            <person name="Kawai J."/>
            <person name="Hayashizaki Y."/>
        </authorList>
    </citation>
    <scope>NUCLEOTIDE SEQUENCE [LARGE SCALE MRNA]</scope>
    <source>
        <strain>C57BL/6J</strain>
        <tissue>Cerebellum</tissue>
    </source>
</reference>
<reference key="3">
    <citation type="journal article" date="2004" name="Genome Res.">
        <title>The status, quality, and expansion of the NIH full-length cDNA project: the Mammalian Gene Collection (MGC).</title>
        <authorList>
            <consortium name="The MGC Project Team"/>
        </authorList>
    </citation>
    <scope>NUCLEOTIDE SEQUENCE [LARGE SCALE MRNA]</scope>
    <source>
        <tissue>Brain</tissue>
    </source>
</reference>
<reference key="4">
    <citation type="journal article" date="2010" name="Cell">
        <title>A tissue-specific atlas of mouse protein phosphorylation and expression.</title>
        <authorList>
            <person name="Huttlin E.L."/>
            <person name="Jedrychowski M.P."/>
            <person name="Elias J.E."/>
            <person name="Goswami T."/>
            <person name="Rad R."/>
            <person name="Beausoleil S.A."/>
            <person name="Villen J."/>
            <person name="Haas W."/>
            <person name="Sowa M.E."/>
            <person name="Gygi S.P."/>
        </authorList>
    </citation>
    <scope>IDENTIFICATION BY MASS SPECTROMETRY [LARGE SCALE ANALYSIS]</scope>
    <source>
        <tissue>Brain</tissue>
    </source>
</reference>
<keyword id="KW-0963">Cytoplasm</keyword>
<keyword id="KW-0413">Isomerase</keyword>
<keyword id="KW-1185">Reference proteome</keyword>
<keyword id="KW-0697">Rotamase</keyword>
<keyword id="KW-0703">Sarcoplasmic reticulum</keyword>
<protein>
    <recommendedName>
        <fullName>Peptidyl-prolyl cis-trans isomerase FKBP1B</fullName>
        <shortName>PPIase FKBP1B</shortName>
        <ecNumber>5.2.1.8</ecNumber>
    </recommendedName>
    <alternativeName>
        <fullName>12.6 kDa FK506-binding protein</fullName>
        <shortName>12.6 kDa FKBP</shortName>
        <shortName>FKBP-12.6</shortName>
    </alternativeName>
    <alternativeName>
        <fullName>FK506-binding protein 1B</fullName>
        <shortName>FKBP-1B</shortName>
    </alternativeName>
    <alternativeName>
        <fullName>Immunophilin FKBP12.6</fullName>
    </alternativeName>
    <alternativeName>
        <fullName>Rotamase</fullName>
    </alternativeName>
</protein>
<feature type="chain" id="PRO_0000075296" description="Peptidyl-prolyl cis-trans isomerase FKBP1B">
    <location>
        <begin position="1"/>
        <end position="108"/>
    </location>
</feature>
<feature type="domain" description="PPIase FKBP-type" evidence="2">
    <location>
        <begin position="20"/>
        <end position="108"/>
    </location>
</feature>
<evidence type="ECO:0000250" key="1"/>
<evidence type="ECO:0000255" key="2">
    <source>
        <dbReference type="PROSITE-ProRule" id="PRU00277"/>
    </source>
</evidence>
<evidence type="ECO:0000305" key="3"/>
<organism>
    <name type="scientific">Mus musculus</name>
    <name type="common">Mouse</name>
    <dbReference type="NCBI Taxonomy" id="10090"/>
    <lineage>
        <taxon>Eukaryota</taxon>
        <taxon>Metazoa</taxon>
        <taxon>Chordata</taxon>
        <taxon>Craniata</taxon>
        <taxon>Vertebrata</taxon>
        <taxon>Euteleostomi</taxon>
        <taxon>Mammalia</taxon>
        <taxon>Eutheria</taxon>
        <taxon>Euarchontoglires</taxon>
        <taxon>Glires</taxon>
        <taxon>Rodentia</taxon>
        <taxon>Myomorpha</taxon>
        <taxon>Muroidea</taxon>
        <taxon>Muridae</taxon>
        <taxon>Murinae</taxon>
        <taxon>Mus</taxon>
        <taxon>Mus</taxon>
    </lineage>
</organism>
<gene>
    <name type="primary">Fkbp1b</name>
</gene>
<accession>Q9Z2I2</accession>
<dbReference type="EC" id="5.2.1.8"/>
<dbReference type="EMBL" id="AF060872">
    <property type="protein sequence ID" value="AAC64923.1"/>
    <property type="molecule type" value="mRNA"/>
</dbReference>
<dbReference type="EMBL" id="AK005201">
    <property type="protein sequence ID" value="BAB23879.1"/>
    <property type="molecule type" value="mRNA"/>
</dbReference>
<dbReference type="EMBL" id="BC061121">
    <property type="protein sequence ID" value="AAH61121.1"/>
    <property type="molecule type" value="mRNA"/>
</dbReference>
<dbReference type="CCDS" id="CCDS25792.1"/>
<dbReference type="RefSeq" id="NP_058559.3">
    <property type="nucleotide sequence ID" value="NM_016863.3"/>
</dbReference>
<dbReference type="BMRB" id="Q9Z2I2"/>
<dbReference type="SMR" id="Q9Z2I2"/>
<dbReference type="BioGRID" id="199683">
    <property type="interactions" value="4"/>
</dbReference>
<dbReference type="DIP" id="DIP-61117N"/>
<dbReference type="FunCoup" id="Q9Z2I2">
    <property type="interactions" value="1190"/>
</dbReference>
<dbReference type="IntAct" id="Q9Z2I2">
    <property type="interactions" value="1"/>
</dbReference>
<dbReference type="STRING" id="10090.ENSMUSP00000020964"/>
<dbReference type="iPTMnet" id="Q9Z2I2"/>
<dbReference type="PhosphoSitePlus" id="Q9Z2I2"/>
<dbReference type="PaxDb" id="10090-ENSMUSP00000020964"/>
<dbReference type="ProteomicsDB" id="267476"/>
<dbReference type="Pumba" id="Q9Z2I2"/>
<dbReference type="Antibodypedia" id="27417">
    <property type="antibodies" value="133 antibodies from 30 providers"/>
</dbReference>
<dbReference type="DNASU" id="14226"/>
<dbReference type="Ensembl" id="ENSMUST00000020964.7">
    <property type="protein sequence ID" value="ENSMUSP00000020964.6"/>
    <property type="gene ID" value="ENSMUSG00000020635.9"/>
</dbReference>
<dbReference type="GeneID" id="14226"/>
<dbReference type="KEGG" id="mmu:14226"/>
<dbReference type="UCSC" id="uc007myj.1">
    <property type="organism name" value="mouse"/>
</dbReference>
<dbReference type="AGR" id="MGI:1336205"/>
<dbReference type="CTD" id="2281"/>
<dbReference type="MGI" id="MGI:1336205">
    <property type="gene designation" value="Fkbp1b"/>
</dbReference>
<dbReference type="VEuPathDB" id="HostDB:ENSMUSG00000020635"/>
<dbReference type="eggNOG" id="KOG0544">
    <property type="taxonomic scope" value="Eukaryota"/>
</dbReference>
<dbReference type="GeneTree" id="ENSGT00940000153311"/>
<dbReference type="HOGENOM" id="CLU_013615_12_1_1"/>
<dbReference type="InParanoid" id="Q9Z2I2"/>
<dbReference type="OMA" id="EQFDASW"/>
<dbReference type="OrthoDB" id="1902587at2759"/>
<dbReference type="PhylomeDB" id="Q9Z2I2"/>
<dbReference type="TreeFam" id="TF105291"/>
<dbReference type="Reactome" id="R-MMU-2672351">
    <property type="pathway name" value="Stimuli-sensing channels"/>
</dbReference>
<dbReference type="Reactome" id="R-MMU-5578775">
    <property type="pathway name" value="Ion homeostasis"/>
</dbReference>
<dbReference type="BioGRID-ORCS" id="14226">
    <property type="hits" value="3 hits in 75 CRISPR screens"/>
</dbReference>
<dbReference type="CD-CODE" id="CE726F99">
    <property type="entry name" value="Postsynaptic density"/>
</dbReference>
<dbReference type="PRO" id="PR:Q9Z2I2"/>
<dbReference type="Proteomes" id="UP000000589">
    <property type="component" value="Chromosome 12"/>
</dbReference>
<dbReference type="RNAct" id="Q9Z2I2">
    <property type="molecule type" value="protein"/>
</dbReference>
<dbReference type="Bgee" id="ENSMUSG00000020635">
    <property type="expression patterns" value="Expressed in trigeminal ganglion and 212 other cell types or tissues"/>
</dbReference>
<dbReference type="ExpressionAtlas" id="Q9Z2I2">
    <property type="expression patterns" value="baseline and differential"/>
</dbReference>
<dbReference type="GO" id="GO:0034704">
    <property type="term" value="C:calcium channel complex"/>
    <property type="evidence" value="ECO:0000314"/>
    <property type="project" value="BHF-UCL"/>
</dbReference>
<dbReference type="GO" id="GO:0016529">
    <property type="term" value="C:sarcoplasmic reticulum"/>
    <property type="evidence" value="ECO:0000314"/>
    <property type="project" value="MGI"/>
</dbReference>
<dbReference type="GO" id="GO:0033017">
    <property type="term" value="C:sarcoplasmic reticulum membrane"/>
    <property type="evidence" value="ECO:0000314"/>
    <property type="project" value="MGI"/>
</dbReference>
<dbReference type="GO" id="GO:0030018">
    <property type="term" value="C:Z disc"/>
    <property type="evidence" value="ECO:0007669"/>
    <property type="project" value="Ensembl"/>
</dbReference>
<dbReference type="GO" id="GO:0019855">
    <property type="term" value="F:calcium channel inhibitor activity"/>
    <property type="evidence" value="ECO:0007669"/>
    <property type="project" value="Ensembl"/>
</dbReference>
<dbReference type="GO" id="GO:0005528">
    <property type="term" value="F:FK506 binding"/>
    <property type="evidence" value="ECO:0000314"/>
    <property type="project" value="MGI"/>
</dbReference>
<dbReference type="GO" id="GO:0003755">
    <property type="term" value="F:peptidyl-prolyl cis-trans isomerase activity"/>
    <property type="evidence" value="ECO:0000314"/>
    <property type="project" value="MGI"/>
</dbReference>
<dbReference type="GO" id="GO:0005102">
    <property type="term" value="F:signaling receptor binding"/>
    <property type="evidence" value="ECO:0007669"/>
    <property type="project" value="Ensembl"/>
</dbReference>
<dbReference type="GO" id="GO:0044325">
    <property type="term" value="F:transmembrane transporter binding"/>
    <property type="evidence" value="ECO:0000353"/>
    <property type="project" value="BHF-UCL"/>
</dbReference>
<dbReference type="GO" id="GO:0019722">
    <property type="term" value="P:calcium-mediated signaling"/>
    <property type="evidence" value="ECO:0000315"/>
    <property type="project" value="BHF-UCL"/>
</dbReference>
<dbReference type="GO" id="GO:0030073">
    <property type="term" value="P:insulin secretion"/>
    <property type="evidence" value="ECO:0000315"/>
    <property type="project" value="MGI"/>
</dbReference>
<dbReference type="GO" id="GO:0035773">
    <property type="term" value="P:insulin secretion involved in cellular response to glucose stimulus"/>
    <property type="evidence" value="ECO:0000315"/>
    <property type="project" value="MGI"/>
</dbReference>
<dbReference type="GO" id="GO:0050849">
    <property type="term" value="P:negative regulation of calcium-mediated signaling"/>
    <property type="evidence" value="ECO:0007669"/>
    <property type="project" value="Ensembl"/>
</dbReference>
<dbReference type="GO" id="GO:0010459">
    <property type="term" value="P:negative regulation of heart rate"/>
    <property type="evidence" value="ECO:0000315"/>
    <property type="project" value="BHF-UCL"/>
</dbReference>
<dbReference type="GO" id="GO:0061179">
    <property type="term" value="P:negative regulation of insulin secretion involved in cellular response to glucose stimulus"/>
    <property type="evidence" value="ECO:0000315"/>
    <property type="project" value="MGI"/>
</dbReference>
<dbReference type="GO" id="GO:0051280">
    <property type="term" value="P:negative regulation of release of sequestered calcium ion into cytosol"/>
    <property type="evidence" value="ECO:0007669"/>
    <property type="project" value="Ensembl"/>
</dbReference>
<dbReference type="GO" id="GO:0019227">
    <property type="term" value="P:neuronal action potential propagation"/>
    <property type="evidence" value="ECO:0000315"/>
    <property type="project" value="MGI"/>
</dbReference>
<dbReference type="GO" id="GO:0007204">
    <property type="term" value="P:positive regulation of cytosolic calcium ion concentration"/>
    <property type="evidence" value="ECO:0000315"/>
    <property type="project" value="MGI"/>
</dbReference>
<dbReference type="GO" id="GO:0010881">
    <property type="term" value="P:regulation of cardiac muscle contraction by regulation of the release of sequestered calcium ion"/>
    <property type="evidence" value="ECO:0000315"/>
    <property type="project" value="BHF-UCL"/>
</dbReference>
<dbReference type="GO" id="GO:0002027">
    <property type="term" value="P:regulation of heart rate"/>
    <property type="evidence" value="ECO:0000315"/>
    <property type="project" value="MGI"/>
</dbReference>
<dbReference type="GO" id="GO:0010880">
    <property type="term" value="P:regulation of release of sequestered calcium ion into cytosol by sarcoplasmic reticulum"/>
    <property type="evidence" value="ECO:0000315"/>
    <property type="project" value="MGI"/>
</dbReference>
<dbReference type="GO" id="GO:0051209">
    <property type="term" value="P:release of sequestered calcium ion into cytosol"/>
    <property type="evidence" value="ECO:0000315"/>
    <property type="project" value="MGI"/>
</dbReference>
<dbReference type="GO" id="GO:0009749">
    <property type="term" value="P:response to glucose"/>
    <property type="evidence" value="ECO:0000315"/>
    <property type="project" value="MGI"/>
</dbReference>
<dbReference type="GO" id="GO:0051775">
    <property type="term" value="P:response to redox state"/>
    <property type="evidence" value="ECO:0007669"/>
    <property type="project" value="Ensembl"/>
</dbReference>
<dbReference type="GO" id="GO:0006939">
    <property type="term" value="P:smooth muscle contraction"/>
    <property type="evidence" value="ECO:0000315"/>
    <property type="project" value="MGI"/>
</dbReference>
<dbReference type="GO" id="GO:0042098">
    <property type="term" value="P:T cell proliferation"/>
    <property type="evidence" value="ECO:0000315"/>
    <property type="project" value="MGI"/>
</dbReference>
<dbReference type="FunFam" id="3.10.50.40:FF:000008">
    <property type="entry name" value="Peptidylprolyl isomerase"/>
    <property type="match status" value="1"/>
</dbReference>
<dbReference type="Gene3D" id="3.10.50.40">
    <property type="match status" value="1"/>
</dbReference>
<dbReference type="InterPro" id="IPR050689">
    <property type="entry name" value="FKBP-type_PPIase"/>
</dbReference>
<dbReference type="InterPro" id="IPR046357">
    <property type="entry name" value="PPIase_dom_sf"/>
</dbReference>
<dbReference type="InterPro" id="IPR001179">
    <property type="entry name" value="PPIase_FKBP_dom"/>
</dbReference>
<dbReference type="PANTHER" id="PTHR10516">
    <property type="entry name" value="PEPTIDYL-PROLYL CIS-TRANS ISOMERASE"/>
    <property type="match status" value="1"/>
</dbReference>
<dbReference type="PANTHER" id="PTHR10516:SF429">
    <property type="entry name" value="PEPTIDYL-PROLYL CIS-TRANS ISOMERASE FKBP1B"/>
    <property type="match status" value="1"/>
</dbReference>
<dbReference type="Pfam" id="PF00254">
    <property type="entry name" value="FKBP_C"/>
    <property type="match status" value="1"/>
</dbReference>
<dbReference type="SUPFAM" id="SSF54534">
    <property type="entry name" value="FKBP-like"/>
    <property type="match status" value="1"/>
</dbReference>
<dbReference type="PROSITE" id="PS50059">
    <property type="entry name" value="FKBP_PPIASE"/>
    <property type="match status" value="1"/>
</dbReference>
<sequence length="108" mass="11798">MGVEIETISPGDGRTFPKKGQICVVHYTGMLQNGKKFDSSRDRNKPFKFRIGKQEVIKGFEEGTAQMSLGQRAKLTCTPDVAYGATGHPGVIPPNATLIFDVELLSLE</sequence>
<proteinExistence type="evidence at protein level"/>
<comment type="function">
    <text evidence="1">Has the potential to contribute to the immunosuppressive and toxic effects of FK506 and rapamycin. PPIases accelerate the folding of proteins. It catalyzes the cis-trans isomerization of proline imidic peptide bonds in oligopeptides (By similarity).</text>
</comment>
<comment type="catalytic activity">
    <reaction>
        <text>[protein]-peptidylproline (omega=180) = [protein]-peptidylproline (omega=0)</text>
        <dbReference type="Rhea" id="RHEA:16237"/>
        <dbReference type="Rhea" id="RHEA-COMP:10747"/>
        <dbReference type="Rhea" id="RHEA-COMP:10748"/>
        <dbReference type="ChEBI" id="CHEBI:83833"/>
        <dbReference type="ChEBI" id="CHEBI:83834"/>
        <dbReference type="EC" id="5.2.1.8"/>
    </reaction>
</comment>
<comment type="activity regulation">
    <text evidence="1">Inhibited by both FK506 and rapamycin.</text>
</comment>
<comment type="subunit">
    <text evidence="1">Identified in a complex composed of RYR2, FKBP1B, PKA catalytic subunit, PRKAR2A, AKAP6, and the protein phosphatases PP2A and PP1. Interacts directly with RYR2 (By similarity).</text>
</comment>
<comment type="interaction">
    <interactant intactId="EBI-6379859">
        <id>Q9Z2I2</id>
    </interactant>
    <interactant intactId="EBI-643628">
        <id>E9Q401</id>
        <label>Ryr2</label>
    </interactant>
    <organismsDiffer>false</organismsDiffer>
    <experiments>3</experiments>
</comment>
<comment type="subcellular location">
    <subcellularLocation>
        <location evidence="1">Cytoplasm</location>
    </subcellularLocation>
    <subcellularLocation>
        <location evidence="1">Sarcoplasmic reticulum</location>
    </subcellularLocation>
</comment>
<comment type="similarity">
    <text evidence="3">Belongs to the FKBP-type PPIase family. FKBP1 subfamily.</text>
</comment>
<name>FKB1B_MOUSE</name>